<sequence length="290" mass="32655">MRIADYSVTKAILDRYGFTFKKSFGQNFLTDTNILQKIVDTAEIDKSVNVIEIGPGIGALTEFLAERAAEVMAFEIDERLVPILADTLRDFDNVQVVNQDILKADLQTQLKQFSNPDLPIKVVANLPYYITTPILMHLIESKIPFQEFVVMMQREVADRISAEPNTKAYGSLSIAVQYYMTAKIAFVVPRTVFVPAPNVDSAILKMTRRDQPLIEVQDEDFFFRVSRVGFVHRRKTLWNNLVSHFGKAEDTKARLEQGLALAGIKPSIRGEALSIQDFGRLADALKQVGL</sequence>
<dbReference type="EC" id="2.1.1.182" evidence="1"/>
<dbReference type="EMBL" id="CP001129">
    <property type="protein sequence ID" value="ACG61636.1"/>
    <property type="molecule type" value="Genomic_DNA"/>
</dbReference>
<dbReference type="RefSeq" id="WP_012514917.1">
    <property type="nucleotide sequence ID" value="NC_011134.1"/>
</dbReference>
<dbReference type="SMR" id="B4U0U9"/>
<dbReference type="KEGG" id="sez:Sez_0258"/>
<dbReference type="HOGENOM" id="CLU_041220_0_0_9"/>
<dbReference type="Proteomes" id="UP000001873">
    <property type="component" value="Chromosome"/>
</dbReference>
<dbReference type="GO" id="GO:0005829">
    <property type="term" value="C:cytosol"/>
    <property type="evidence" value="ECO:0007669"/>
    <property type="project" value="TreeGrafter"/>
</dbReference>
<dbReference type="GO" id="GO:0052908">
    <property type="term" value="F:16S rRNA (adenine(1518)-N(6)/adenine(1519)-N(6))-dimethyltransferase activity"/>
    <property type="evidence" value="ECO:0007669"/>
    <property type="project" value="UniProtKB-EC"/>
</dbReference>
<dbReference type="GO" id="GO:0003723">
    <property type="term" value="F:RNA binding"/>
    <property type="evidence" value="ECO:0007669"/>
    <property type="project" value="UniProtKB-KW"/>
</dbReference>
<dbReference type="CDD" id="cd02440">
    <property type="entry name" value="AdoMet_MTases"/>
    <property type="match status" value="1"/>
</dbReference>
<dbReference type="FunFam" id="3.40.50.150:FF:000023">
    <property type="entry name" value="Ribosomal RNA small subunit methyltransferase A"/>
    <property type="match status" value="1"/>
</dbReference>
<dbReference type="Gene3D" id="1.10.8.100">
    <property type="entry name" value="Ribosomal RNA adenine dimethylase-like, domain 2"/>
    <property type="match status" value="1"/>
</dbReference>
<dbReference type="Gene3D" id="3.40.50.150">
    <property type="entry name" value="Vaccinia Virus protein VP39"/>
    <property type="match status" value="1"/>
</dbReference>
<dbReference type="HAMAP" id="MF_00607">
    <property type="entry name" value="16SrRNA_methyltr_A"/>
    <property type="match status" value="1"/>
</dbReference>
<dbReference type="InterPro" id="IPR001737">
    <property type="entry name" value="KsgA/Erm"/>
</dbReference>
<dbReference type="InterPro" id="IPR023165">
    <property type="entry name" value="rRNA_Ade_diMease-like_C"/>
</dbReference>
<dbReference type="InterPro" id="IPR020596">
    <property type="entry name" value="rRNA_Ade_Mease_Trfase_CS"/>
</dbReference>
<dbReference type="InterPro" id="IPR020598">
    <property type="entry name" value="rRNA_Ade_methylase_Trfase_N"/>
</dbReference>
<dbReference type="InterPro" id="IPR011530">
    <property type="entry name" value="rRNA_adenine_dimethylase"/>
</dbReference>
<dbReference type="InterPro" id="IPR029063">
    <property type="entry name" value="SAM-dependent_MTases_sf"/>
</dbReference>
<dbReference type="NCBIfam" id="TIGR00755">
    <property type="entry name" value="ksgA"/>
    <property type="match status" value="1"/>
</dbReference>
<dbReference type="PANTHER" id="PTHR11727">
    <property type="entry name" value="DIMETHYLADENOSINE TRANSFERASE"/>
    <property type="match status" value="1"/>
</dbReference>
<dbReference type="PANTHER" id="PTHR11727:SF7">
    <property type="entry name" value="DIMETHYLADENOSINE TRANSFERASE-RELATED"/>
    <property type="match status" value="1"/>
</dbReference>
<dbReference type="Pfam" id="PF00398">
    <property type="entry name" value="RrnaAD"/>
    <property type="match status" value="1"/>
</dbReference>
<dbReference type="SMART" id="SM00650">
    <property type="entry name" value="rADc"/>
    <property type="match status" value="1"/>
</dbReference>
<dbReference type="SUPFAM" id="SSF53335">
    <property type="entry name" value="S-adenosyl-L-methionine-dependent methyltransferases"/>
    <property type="match status" value="1"/>
</dbReference>
<dbReference type="PROSITE" id="PS01131">
    <property type="entry name" value="RRNA_A_DIMETH"/>
    <property type="match status" value="1"/>
</dbReference>
<dbReference type="PROSITE" id="PS51689">
    <property type="entry name" value="SAM_RNA_A_N6_MT"/>
    <property type="match status" value="1"/>
</dbReference>
<name>RSMA_STREM</name>
<protein>
    <recommendedName>
        <fullName evidence="1">Ribosomal RNA small subunit methyltransferase A</fullName>
        <ecNumber evidence="1">2.1.1.182</ecNumber>
    </recommendedName>
    <alternativeName>
        <fullName evidence="1">16S rRNA (adenine(1518)-N(6)/adenine(1519)-N(6))-dimethyltransferase</fullName>
    </alternativeName>
    <alternativeName>
        <fullName evidence="1">16S rRNA dimethyladenosine transferase</fullName>
    </alternativeName>
    <alternativeName>
        <fullName evidence="1">16S rRNA dimethylase</fullName>
    </alternativeName>
    <alternativeName>
        <fullName evidence="1">S-adenosylmethionine-6-N', N'-adenosyl(rRNA) dimethyltransferase</fullName>
    </alternativeName>
</protein>
<comment type="function">
    <text evidence="1">Specifically dimethylates two adjacent adenosines (A1518 and A1519) in the loop of a conserved hairpin near the 3'-end of 16S rRNA in the 30S particle. May play a critical role in biogenesis of 30S subunits.</text>
</comment>
<comment type="catalytic activity">
    <reaction evidence="1">
        <text>adenosine(1518)/adenosine(1519) in 16S rRNA + 4 S-adenosyl-L-methionine = N(6)-dimethyladenosine(1518)/N(6)-dimethyladenosine(1519) in 16S rRNA + 4 S-adenosyl-L-homocysteine + 4 H(+)</text>
        <dbReference type="Rhea" id="RHEA:19609"/>
        <dbReference type="Rhea" id="RHEA-COMP:10232"/>
        <dbReference type="Rhea" id="RHEA-COMP:10233"/>
        <dbReference type="ChEBI" id="CHEBI:15378"/>
        <dbReference type="ChEBI" id="CHEBI:57856"/>
        <dbReference type="ChEBI" id="CHEBI:59789"/>
        <dbReference type="ChEBI" id="CHEBI:74411"/>
        <dbReference type="ChEBI" id="CHEBI:74493"/>
        <dbReference type="EC" id="2.1.1.182"/>
    </reaction>
</comment>
<comment type="subcellular location">
    <subcellularLocation>
        <location evidence="1">Cytoplasm</location>
    </subcellularLocation>
</comment>
<comment type="similarity">
    <text evidence="1">Belongs to the class I-like SAM-binding methyltransferase superfamily. rRNA adenine N(6)-methyltransferase family. RsmA subfamily.</text>
</comment>
<evidence type="ECO:0000255" key="1">
    <source>
        <dbReference type="HAMAP-Rule" id="MF_00607"/>
    </source>
</evidence>
<proteinExistence type="inferred from homology"/>
<organism>
    <name type="scientific">Streptococcus equi subsp. zooepidemicus (strain MGCS10565)</name>
    <dbReference type="NCBI Taxonomy" id="552526"/>
    <lineage>
        <taxon>Bacteria</taxon>
        <taxon>Bacillati</taxon>
        <taxon>Bacillota</taxon>
        <taxon>Bacilli</taxon>
        <taxon>Lactobacillales</taxon>
        <taxon>Streptococcaceae</taxon>
        <taxon>Streptococcus</taxon>
    </lineage>
</organism>
<reference key="1">
    <citation type="journal article" date="2008" name="PLoS ONE">
        <title>Genome sequence of a lancefield group C Streptococcus zooepidemicus strain causing epidemic nephritis: new information about an old disease.</title>
        <authorList>
            <person name="Beres S.B."/>
            <person name="Sesso R."/>
            <person name="Pinto S.W.L."/>
            <person name="Hoe N.P."/>
            <person name="Porcella S.F."/>
            <person name="Deleo F.R."/>
            <person name="Musser J.M."/>
        </authorList>
    </citation>
    <scope>NUCLEOTIDE SEQUENCE [LARGE SCALE GENOMIC DNA]</scope>
    <source>
        <strain>MGCS10565</strain>
    </source>
</reference>
<feature type="chain" id="PRO_1000130324" description="Ribosomal RNA small subunit methyltransferase A">
    <location>
        <begin position="1"/>
        <end position="290"/>
    </location>
</feature>
<feature type="binding site" evidence="1">
    <location>
        <position position="27"/>
    </location>
    <ligand>
        <name>S-adenosyl-L-methionine</name>
        <dbReference type="ChEBI" id="CHEBI:59789"/>
    </ligand>
</feature>
<feature type="binding site" evidence="1">
    <location>
        <position position="29"/>
    </location>
    <ligand>
        <name>S-adenosyl-L-methionine</name>
        <dbReference type="ChEBI" id="CHEBI:59789"/>
    </ligand>
</feature>
<feature type="binding site" evidence="1">
    <location>
        <position position="54"/>
    </location>
    <ligand>
        <name>S-adenosyl-L-methionine</name>
        <dbReference type="ChEBI" id="CHEBI:59789"/>
    </ligand>
</feature>
<feature type="binding site" evidence="1">
    <location>
        <position position="75"/>
    </location>
    <ligand>
        <name>S-adenosyl-L-methionine</name>
        <dbReference type="ChEBI" id="CHEBI:59789"/>
    </ligand>
</feature>
<feature type="binding site" evidence="1">
    <location>
        <position position="100"/>
    </location>
    <ligand>
        <name>S-adenosyl-L-methionine</name>
        <dbReference type="ChEBI" id="CHEBI:59789"/>
    </ligand>
</feature>
<feature type="binding site" evidence="1">
    <location>
        <position position="125"/>
    </location>
    <ligand>
        <name>S-adenosyl-L-methionine</name>
        <dbReference type="ChEBI" id="CHEBI:59789"/>
    </ligand>
</feature>
<keyword id="KW-0963">Cytoplasm</keyword>
<keyword id="KW-0489">Methyltransferase</keyword>
<keyword id="KW-0694">RNA-binding</keyword>
<keyword id="KW-0698">rRNA processing</keyword>
<keyword id="KW-0949">S-adenosyl-L-methionine</keyword>
<keyword id="KW-0808">Transferase</keyword>
<accession>B4U0U9</accession>
<gene>
    <name evidence="1" type="primary">rsmA</name>
    <name evidence="1" type="synonym">ksgA</name>
    <name type="ordered locus">Sez_0258</name>
</gene>